<accession>B5Y8G6</accession>
<protein>
    <recommendedName>
        <fullName evidence="1">Serine hydroxymethyltransferase</fullName>
        <shortName evidence="1">SHMT</shortName>
        <shortName evidence="1">Serine methylase</shortName>
        <ecNumber evidence="1">2.1.2.1</ecNumber>
    </recommendedName>
</protein>
<keyword id="KW-0028">Amino-acid biosynthesis</keyword>
<keyword id="KW-0963">Cytoplasm</keyword>
<keyword id="KW-0554">One-carbon metabolism</keyword>
<keyword id="KW-0663">Pyridoxal phosphate</keyword>
<keyword id="KW-1185">Reference proteome</keyword>
<keyword id="KW-0808">Transferase</keyword>
<name>GLYA_COPPD</name>
<comment type="function">
    <text evidence="1">Catalyzes the reversible interconversion of serine and glycine with tetrahydrofolate (THF) serving as the one-carbon carrier. This reaction serves as the major source of one-carbon groups required for the biosynthesis of purines, thymidylate, methionine, and other important biomolecules. Also exhibits THF-independent aldolase activity toward beta-hydroxyamino acids, producing glycine and aldehydes, via a retro-aldol mechanism.</text>
</comment>
<comment type="catalytic activity">
    <reaction evidence="1">
        <text>(6R)-5,10-methylene-5,6,7,8-tetrahydrofolate + glycine + H2O = (6S)-5,6,7,8-tetrahydrofolate + L-serine</text>
        <dbReference type="Rhea" id="RHEA:15481"/>
        <dbReference type="ChEBI" id="CHEBI:15377"/>
        <dbReference type="ChEBI" id="CHEBI:15636"/>
        <dbReference type="ChEBI" id="CHEBI:33384"/>
        <dbReference type="ChEBI" id="CHEBI:57305"/>
        <dbReference type="ChEBI" id="CHEBI:57453"/>
        <dbReference type="EC" id="2.1.2.1"/>
    </reaction>
</comment>
<comment type="cofactor">
    <cofactor evidence="1">
        <name>pyridoxal 5'-phosphate</name>
        <dbReference type="ChEBI" id="CHEBI:597326"/>
    </cofactor>
</comment>
<comment type="pathway">
    <text evidence="1">One-carbon metabolism; tetrahydrofolate interconversion.</text>
</comment>
<comment type="pathway">
    <text evidence="1">Amino-acid biosynthesis; glycine biosynthesis; glycine from L-serine: step 1/1.</text>
</comment>
<comment type="subunit">
    <text evidence="1">Homodimer.</text>
</comment>
<comment type="subcellular location">
    <subcellularLocation>
        <location evidence="1">Cytoplasm</location>
    </subcellularLocation>
</comment>
<comment type="similarity">
    <text evidence="1">Belongs to the SHMT family.</text>
</comment>
<feature type="chain" id="PRO_1000116823" description="Serine hydroxymethyltransferase">
    <location>
        <begin position="1"/>
        <end position="415"/>
    </location>
</feature>
<feature type="binding site" evidence="1">
    <location>
        <position position="119"/>
    </location>
    <ligand>
        <name>(6S)-5,6,7,8-tetrahydrofolate</name>
        <dbReference type="ChEBI" id="CHEBI:57453"/>
    </ligand>
</feature>
<feature type="binding site" evidence="1">
    <location>
        <begin position="123"/>
        <end position="125"/>
    </location>
    <ligand>
        <name>(6S)-5,6,7,8-tetrahydrofolate</name>
        <dbReference type="ChEBI" id="CHEBI:57453"/>
    </ligand>
</feature>
<feature type="site" description="Plays an important role in substrate specificity" evidence="1">
    <location>
        <position position="227"/>
    </location>
</feature>
<feature type="modified residue" description="N6-(pyridoxal phosphate)lysine" evidence="1">
    <location>
        <position position="228"/>
    </location>
</feature>
<dbReference type="EC" id="2.1.2.1" evidence="1"/>
<dbReference type="EMBL" id="CP001145">
    <property type="protein sequence ID" value="ACI17752.1"/>
    <property type="molecule type" value="Genomic_DNA"/>
</dbReference>
<dbReference type="RefSeq" id="WP_012544404.1">
    <property type="nucleotide sequence ID" value="NC_011295.1"/>
</dbReference>
<dbReference type="SMR" id="B5Y8G6"/>
<dbReference type="STRING" id="309798.COPRO5265_0715"/>
<dbReference type="KEGG" id="cpo:COPRO5265_0715"/>
<dbReference type="eggNOG" id="COG0112">
    <property type="taxonomic scope" value="Bacteria"/>
</dbReference>
<dbReference type="HOGENOM" id="CLU_022477_2_1_9"/>
<dbReference type="OrthoDB" id="9803846at2"/>
<dbReference type="UniPathway" id="UPA00193"/>
<dbReference type="UniPathway" id="UPA00288">
    <property type="reaction ID" value="UER01023"/>
</dbReference>
<dbReference type="Proteomes" id="UP000001732">
    <property type="component" value="Chromosome"/>
</dbReference>
<dbReference type="GO" id="GO:0005829">
    <property type="term" value="C:cytosol"/>
    <property type="evidence" value="ECO:0007669"/>
    <property type="project" value="TreeGrafter"/>
</dbReference>
<dbReference type="GO" id="GO:0004372">
    <property type="term" value="F:glycine hydroxymethyltransferase activity"/>
    <property type="evidence" value="ECO:0007669"/>
    <property type="project" value="UniProtKB-UniRule"/>
</dbReference>
<dbReference type="GO" id="GO:0030170">
    <property type="term" value="F:pyridoxal phosphate binding"/>
    <property type="evidence" value="ECO:0007669"/>
    <property type="project" value="UniProtKB-UniRule"/>
</dbReference>
<dbReference type="GO" id="GO:0019264">
    <property type="term" value="P:glycine biosynthetic process from serine"/>
    <property type="evidence" value="ECO:0007669"/>
    <property type="project" value="UniProtKB-UniRule"/>
</dbReference>
<dbReference type="GO" id="GO:0035999">
    <property type="term" value="P:tetrahydrofolate interconversion"/>
    <property type="evidence" value="ECO:0007669"/>
    <property type="project" value="UniProtKB-UniRule"/>
</dbReference>
<dbReference type="CDD" id="cd00378">
    <property type="entry name" value="SHMT"/>
    <property type="match status" value="1"/>
</dbReference>
<dbReference type="FunFam" id="3.40.640.10:FF:000001">
    <property type="entry name" value="Serine hydroxymethyltransferase"/>
    <property type="match status" value="1"/>
</dbReference>
<dbReference type="Gene3D" id="3.90.1150.10">
    <property type="entry name" value="Aspartate Aminotransferase, domain 1"/>
    <property type="match status" value="1"/>
</dbReference>
<dbReference type="Gene3D" id="3.40.640.10">
    <property type="entry name" value="Type I PLP-dependent aspartate aminotransferase-like (Major domain)"/>
    <property type="match status" value="1"/>
</dbReference>
<dbReference type="HAMAP" id="MF_00051">
    <property type="entry name" value="SHMT"/>
    <property type="match status" value="1"/>
</dbReference>
<dbReference type="InterPro" id="IPR015424">
    <property type="entry name" value="PyrdxlP-dep_Trfase"/>
</dbReference>
<dbReference type="InterPro" id="IPR015421">
    <property type="entry name" value="PyrdxlP-dep_Trfase_major"/>
</dbReference>
<dbReference type="InterPro" id="IPR015422">
    <property type="entry name" value="PyrdxlP-dep_Trfase_small"/>
</dbReference>
<dbReference type="InterPro" id="IPR001085">
    <property type="entry name" value="Ser_HO-MeTrfase"/>
</dbReference>
<dbReference type="InterPro" id="IPR049943">
    <property type="entry name" value="Ser_HO-MeTrfase-like"/>
</dbReference>
<dbReference type="InterPro" id="IPR019798">
    <property type="entry name" value="Ser_HO-MeTrfase_PLP_BS"/>
</dbReference>
<dbReference type="InterPro" id="IPR039429">
    <property type="entry name" value="SHMT-like_dom"/>
</dbReference>
<dbReference type="NCBIfam" id="NF000586">
    <property type="entry name" value="PRK00011.1"/>
    <property type="match status" value="1"/>
</dbReference>
<dbReference type="PANTHER" id="PTHR11680">
    <property type="entry name" value="SERINE HYDROXYMETHYLTRANSFERASE"/>
    <property type="match status" value="1"/>
</dbReference>
<dbReference type="PANTHER" id="PTHR11680:SF35">
    <property type="entry name" value="SERINE HYDROXYMETHYLTRANSFERASE 1"/>
    <property type="match status" value="1"/>
</dbReference>
<dbReference type="Pfam" id="PF00464">
    <property type="entry name" value="SHMT"/>
    <property type="match status" value="1"/>
</dbReference>
<dbReference type="PIRSF" id="PIRSF000412">
    <property type="entry name" value="SHMT"/>
    <property type="match status" value="1"/>
</dbReference>
<dbReference type="SUPFAM" id="SSF53383">
    <property type="entry name" value="PLP-dependent transferases"/>
    <property type="match status" value="1"/>
</dbReference>
<dbReference type="PROSITE" id="PS00096">
    <property type="entry name" value="SHMT"/>
    <property type="match status" value="1"/>
</dbReference>
<sequence>MRYDHIEEGDPEIFELMRRESLRQNRTLDLIASENLASEAVLEATGSIFTNKYAEGYPNARYYGGCEVADQVEILAIERAKKLFDADHANVQPHSGSQANQAVYLAFLKPGDTILSMSLAAGGHLSHGAPVSMTGKWFNIVHYGVDPKTETIDLNEVEKLALEHKPKLIIAGASAYPRFIDFQGFREIADKVGAIFMVDMAHIAGLVAAGVHPSPVPFADVVTTTTHKTLRGPRGGLILCKAEHAKAIDKAVFPGVQGGPLVHIIAAKAVAFKEDSEPSFKEYSAQVVKNAKTMAETFASKGVRVVTGGTDNHLMLLDVTSVGLTGKEAEELLAEVGIVVNKNAIPFDKLPPRVASGIRIGTPNITTRGLRDEECKLLAEQMSELFITKSEKVKAEIKGLVQELTERYPAYKGWS</sequence>
<gene>
    <name evidence="1" type="primary">glyA</name>
    <name type="ordered locus">COPRO5265_0715</name>
</gene>
<proteinExistence type="inferred from homology"/>
<evidence type="ECO:0000255" key="1">
    <source>
        <dbReference type="HAMAP-Rule" id="MF_00051"/>
    </source>
</evidence>
<reference key="1">
    <citation type="submission" date="2008-08" db="EMBL/GenBank/DDBJ databases">
        <title>The complete genome sequence of Coprothermobacter proteolyticus strain ATCC 5245 / DSM 5265 / BT.</title>
        <authorList>
            <person name="Dodson R.J."/>
            <person name="Durkin A.S."/>
            <person name="Wu M."/>
            <person name="Eisen J."/>
            <person name="Sutton G."/>
        </authorList>
    </citation>
    <scope>NUCLEOTIDE SEQUENCE [LARGE SCALE GENOMIC DNA]</scope>
    <source>
        <strain>ATCC 35245 / DSM 5265 / OCM 4 / BT</strain>
    </source>
</reference>
<organism>
    <name type="scientific">Coprothermobacter proteolyticus (strain ATCC 35245 / DSM 5265 / OCM 4 / BT)</name>
    <dbReference type="NCBI Taxonomy" id="309798"/>
    <lineage>
        <taxon>Bacteria</taxon>
        <taxon>Pseudomonadati</taxon>
        <taxon>Coprothermobacterota</taxon>
        <taxon>Coprothermobacteria</taxon>
        <taxon>Coprothermobacterales</taxon>
        <taxon>Coprothermobacteraceae</taxon>
        <taxon>Coprothermobacter</taxon>
    </lineage>
</organism>